<name>AUSG_PENBI</name>
<feature type="chain" id="PRO_0000453838" description="Cytochrome P450 monooxygenase ausG">
    <location>
        <begin position="1"/>
        <end position="530"/>
    </location>
</feature>
<feature type="transmembrane region" description="Helical" evidence="3">
    <location>
        <begin position="31"/>
        <end position="51"/>
    </location>
</feature>
<feature type="binding site" description="axial binding residue" evidence="1">
    <location>
        <position position="470"/>
    </location>
    <ligand>
        <name>heme</name>
        <dbReference type="ChEBI" id="CHEBI:30413"/>
    </ligand>
    <ligandPart>
        <name>Fe</name>
        <dbReference type="ChEBI" id="CHEBI:18248"/>
    </ligandPart>
</feature>
<gene>
    <name evidence="5" type="primary">ausG</name>
    <name type="ORF">PMG11_06809</name>
</gene>
<evidence type="ECO:0000250" key="1">
    <source>
        <dbReference type="UniProtKB" id="P04798"/>
    </source>
</evidence>
<evidence type="ECO:0000250" key="2">
    <source>
        <dbReference type="UniProtKB" id="Q5AR32"/>
    </source>
</evidence>
<evidence type="ECO:0000255" key="3"/>
<evidence type="ECO:0000269" key="4">
    <source>
    </source>
</evidence>
<evidence type="ECO:0000303" key="5">
    <source>
    </source>
</evidence>
<evidence type="ECO:0000305" key="6"/>
<evidence type="ECO:0000305" key="7">
    <source>
    </source>
</evidence>
<organism>
    <name type="scientific">Penicillium brasilianum</name>
    <dbReference type="NCBI Taxonomy" id="104259"/>
    <lineage>
        <taxon>Eukaryota</taxon>
        <taxon>Fungi</taxon>
        <taxon>Dikarya</taxon>
        <taxon>Ascomycota</taxon>
        <taxon>Pezizomycotina</taxon>
        <taxon>Eurotiomycetes</taxon>
        <taxon>Eurotiomycetidae</taxon>
        <taxon>Eurotiales</taxon>
        <taxon>Aspergillaceae</taxon>
        <taxon>Penicillium</taxon>
    </lineage>
</organism>
<proteinExistence type="inferred from homology"/>
<keyword id="KW-0349">Heme</keyword>
<keyword id="KW-0408">Iron</keyword>
<keyword id="KW-0472">Membrane</keyword>
<keyword id="KW-0479">Metal-binding</keyword>
<keyword id="KW-0503">Monooxygenase</keyword>
<keyword id="KW-0560">Oxidoreductase</keyword>
<keyword id="KW-1185">Reference proteome</keyword>
<keyword id="KW-0812">Transmembrane</keyword>
<keyword id="KW-1133">Transmembrane helix</keyword>
<dbReference type="EC" id="1.-.-.-" evidence="7"/>
<dbReference type="EMBL" id="CDHK01000006">
    <property type="protein sequence ID" value="CEJ58139.1"/>
    <property type="molecule type" value="Genomic_DNA"/>
</dbReference>
<dbReference type="SMR" id="A0A0F7TN60"/>
<dbReference type="STRING" id="104259.A0A0F7TN60"/>
<dbReference type="OrthoDB" id="1844152at2759"/>
<dbReference type="UniPathway" id="UPA00213"/>
<dbReference type="Proteomes" id="UP000042958">
    <property type="component" value="Unassembled WGS sequence"/>
</dbReference>
<dbReference type="GO" id="GO:0016020">
    <property type="term" value="C:membrane"/>
    <property type="evidence" value="ECO:0007669"/>
    <property type="project" value="UniProtKB-SubCell"/>
</dbReference>
<dbReference type="GO" id="GO:0020037">
    <property type="term" value="F:heme binding"/>
    <property type="evidence" value="ECO:0007669"/>
    <property type="project" value="InterPro"/>
</dbReference>
<dbReference type="GO" id="GO:0005506">
    <property type="term" value="F:iron ion binding"/>
    <property type="evidence" value="ECO:0007669"/>
    <property type="project" value="InterPro"/>
</dbReference>
<dbReference type="GO" id="GO:0004497">
    <property type="term" value="F:monooxygenase activity"/>
    <property type="evidence" value="ECO:0007669"/>
    <property type="project" value="UniProtKB-KW"/>
</dbReference>
<dbReference type="GO" id="GO:0016705">
    <property type="term" value="F:oxidoreductase activity, acting on paired donors, with incorporation or reduction of molecular oxygen"/>
    <property type="evidence" value="ECO:0007669"/>
    <property type="project" value="InterPro"/>
</dbReference>
<dbReference type="GO" id="GO:0043386">
    <property type="term" value="P:mycotoxin biosynthetic process"/>
    <property type="evidence" value="ECO:0007669"/>
    <property type="project" value="UniProtKB-ARBA"/>
</dbReference>
<dbReference type="GO" id="GO:0016114">
    <property type="term" value="P:terpenoid biosynthetic process"/>
    <property type="evidence" value="ECO:0007669"/>
    <property type="project" value="UniProtKB-UniPathway"/>
</dbReference>
<dbReference type="CDD" id="cd11041">
    <property type="entry name" value="CYP503A1-like"/>
    <property type="match status" value="1"/>
</dbReference>
<dbReference type="FunFam" id="1.10.630.10:FF:000059">
    <property type="entry name" value="Cytochrome P450 monooxygenase"/>
    <property type="match status" value="1"/>
</dbReference>
<dbReference type="Gene3D" id="1.10.630.10">
    <property type="entry name" value="Cytochrome P450"/>
    <property type="match status" value="1"/>
</dbReference>
<dbReference type="InterPro" id="IPR001128">
    <property type="entry name" value="Cyt_P450"/>
</dbReference>
<dbReference type="InterPro" id="IPR017972">
    <property type="entry name" value="Cyt_P450_CS"/>
</dbReference>
<dbReference type="InterPro" id="IPR002403">
    <property type="entry name" value="Cyt_P450_E_grp-IV"/>
</dbReference>
<dbReference type="InterPro" id="IPR036396">
    <property type="entry name" value="Cyt_P450_sf"/>
</dbReference>
<dbReference type="PANTHER" id="PTHR46206">
    <property type="entry name" value="CYTOCHROME P450"/>
    <property type="match status" value="1"/>
</dbReference>
<dbReference type="PANTHER" id="PTHR46206:SF2">
    <property type="entry name" value="CYTOCHROME P450 MONOOXYGENASE AUSG-RELATED"/>
    <property type="match status" value="1"/>
</dbReference>
<dbReference type="Pfam" id="PF00067">
    <property type="entry name" value="p450"/>
    <property type="match status" value="1"/>
</dbReference>
<dbReference type="PRINTS" id="PR00465">
    <property type="entry name" value="EP450IV"/>
</dbReference>
<dbReference type="SUPFAM" id="SSF48264">
    <property type="entry name" value="Cytochrome P450"/>
    <property type="match status" value="1"/>
</dbReference>
<dbReference type="PROSITE" id="PS00086">
    <property type="entry name" value="CYTOCHROME_P450"/>
    <property type="match status" value="1"/>
</dbReference>
<comment type="function">
    <text evidence="2 4">Cytochrome P450 monooxygenase; part of the gene cluster B that mediates the biosynthesis of the fungal meroterpenoid acetoxydehydroaustin (PubMed:29076725). The first step of the pathway is the synthesis of 3,5-dimethylorsellinic acid by the polyketide synthase ausA (By similarity). 3,5-dimethylorsellinic acid is then prenylated by the polyprenyl transferase ausN (By similarity). Further epoxidation by the FAD-dependent monooxygenase ausM and cyclization by the probable terpene cyclase ausL lead to the formation of protoaustinoid A (By similarity). Protoaustinoid A is then oxidized to spiro-lactone preaustinoid A3 by the combined action of the FAD-binding monooxygenases ausB and ausC, and the dioxygenase ausE (By similarity). Acid-catalyzed keto-rearrangement and ring contraction of the tetraketide portion of preaustinoid A3 by ausJ lead to the formation of preaustinoid A4 (By similarity). The aldo-keto reductase ausK, with the help of ausH, is involved in the next step by transforming preaustinoid A4 into isoaustinone which is in turn hydroxylated by the P450 monooxygenase ausI to form austinolide (By similarity). The cytochrome P450 monooxygenase ausG then modifies austinolide to austinol (By similarity). Austinol is further acetylated to austin by the O-acetyltransferase ausP, which spontaneously changes to dehydroaustin (PubMed:29076725). The cytochrome P450 monooxygenase then converts dehydroaustin is into 7-dehydrodehydroaustin (PubMed:29076725). The hydroxylation catalyzed by ausR permits the second O-acetyltransferase ausQ to add an additional acetyl group to the molecule, leading to the formation of acetoxydehydroaustin (PubMed:29076725). Due to genetic rearrangements of the clusters and the subsequent loss of some enzymes, the end product of the Penicillium brasilianum austinoid biosynthesis clusters is acetoxydehydroaustin (PubMed:29076725).</text>
</comment>
<comment type="cofactor">
    <cofactor evidence="1">
        <name>heme</name>
        <dbReference type="ChEBI" id="CHEBI:30413"/>
    </cofactor>
</comment>
<comment type="pathway">
    <text evidence="7">Secondary metabolite biosynthesis; terpenoid biosynthesis.</text>
</comment>
<comment type="subcellular location">
    <subcellularLocation>
        <location evidence="3">Membrane</location>
        <topology evidence="3">Single-pass membrane protein</topology>
    </subcellularLocation>
</comment>
<comment type="miscellaneous">
    <text evidence="7">In A.calidoustus, the austinoid gene cluster lies on a contiguous DNA region, while clusters from E.nidulans and P.brasilianum are split in their respective genomes. Genetic rearrangements provoked variability among the clusters and E.nidulans produces the least number of austionoid derivatives with the end products austinol and dehydroaustinol, while P.brasilianum can produce until acetoxydehydroaustin, and A.calidoustus produces the highest number of identified derivatives.</text>
</comment>
<comment type="similarity">
    <text evidence="6">Belongs to the cytochrome P450 family.</text>
</comment>
<sequence length="530" mass="59058">MAMVTPGLWANFSHSSHELGIANGFEFLNSLLVAYRLPGLLLLFSITIILFQPLRKKSDLPLINSGKGPFSILRGYRSRKTFAAELPRLVAEGLSKASAFRIAAPDGVNIVLAPSYAHEIGEHPDLNPGPIAGDEFNCHIDGFEVFAQLGTSDVISESVRTRLTRQLTKLTPLLTSETALLLQSQWKDAPNWVEVSPHETAMFILSRLSSLVFVGDDLGRNPDWVHILTSYNNEAFAAAEELNLWPQILRPLVAHLKPSCRQLRRYIRDARALLIPVIEQRHHAQSQGDRREYNDAIEWLNETSHSLAQSYDPLLSQMLLAIGSFHTSSDLLGQVLLDLCMRQDWEVLVGELRKEIISSLQGVGWDKISLNNLKLMDSVLKESQRLKPASTVTMGRYASREIILSDGTRIPKGSTVFIANVAMRDPNIYPDPDVFIPDRFTTRREKGDSSAYLVSASPEHIGFGLGRHACPGRFFAANEVKIVLSHMLLKYDIKLPDNGAAVAPSTSGIFLETNPNARICVRRRKEEILI</sequence>
<accession>A0A0F7TN60</accession>
<protein>
    <recommendedName>
        <fullName evidence="5">Cytochrome P450 monooxygenase ausG</fullName>
        <ecNumber evidence="7">1.-.-.-</ecNumber>
    </recommendedName>
    <alternativeName>
        <fullName evidence="5">Austinoid biosynthesis clusters protein G</fullName>
    </alternativeName>
</protein>
<reference key="1">
    <citation type="journal article" date="2015" name="Genome Announc.">
        <title>Draft genome sequence of the fungus Penicillium brasilianum MG11.</title>
        <authorList>
            <person name="Horn F."/>
            <person name="Linde J."/>
            <person name="Mattern D.J."/>
            <person name="Walther G."/>
            <person name="Guthke R."/>
            <person name="Brakhage A.A."/>
            <person name="Valiante V."/>
        </authorList>
    </citation>
    <scope>NUCLEOTIDE SEQUENCE [LARGE SCALE GENOMIC DNA]</scope>
    <source>
        <strain>MG11</strain>
    </source>
</reference>
<reference key="2">
    <citation type="journal article" date="2016" name="J. Am. Chem. Soc.">
        <title>Discovery of key dioxygenases that diverged the paraherquonin and acetoxydehydroaustin pathways in Penicillium brasilianum.</title>
        <authorList>
            <person name="Matsuda Y."/>
            <person name="Iwabuchi T."/>
            <person name="Fujimoto T."/>
            <person name="Awakawa T."/>
            <person name="Nakashima Y."/>
            <person name="Mori T."/>
            <person name="Zhang H."/>
            <person name="Hayashi F."/>
            <person name="Abe I."/>
        </authorList>
    </citation>
    <scope>FUNCTION</scope>
</reference>
<reference key="3">
    <citation type="journal article" date="2017" name="ACS Chem. Biol.">
        <title>Rewiring of the austinoid biosynthetic pathway in filamentous fungi.</title>
        <authorList>
            <person name="Mattern D.J."/>
            <person name="Valiante V."/>
            <person name="Horn F."/>
            <person name="Petzke L."/>
            <person name="Brakhage A.A."/>
        </authorList>
    </citation>
    <scope>FUNCTION</scope>
</reference>